<reference key="1">
    <citation type="journal article" date="1987" name="EMBO J.">
        <title>Nucleotide sequence analysis of the env gene and its flanking regions of the human spumaretrovirus reveals two novel genes.</title>
        <authorList>
            <person name="Fluegel R.M."/>
            <person name="Rethwilm A."/>
            <person name="Maurer B."/>
            <person name="Darai G."/>
        </authorList>
    </citation>
    <scope>NUCLEOTIDE SEQUENCE [GENOMIC RNA] (ISOFORM BEL-2)</scope>
</reference>
<reference key="2">
    <citation type="submission" date="1995-02" db="EMBL/GenBank/DDBJ databases">
        <authorList>
            <person name="Fluegel R.M."/>
        </authorList>
    </citation>
    <scope>NUCLEOTIDE SEQUENCE [GENOMIC RNA] (ISOFORMS BET AND BEL-2)</scope>
</reference>
<reference key="3">
    <citation type="journal article" date="2009" name="J. Biol. Chem.">
        <title>Species-specific inhibition of APOBEC3C by the prototype foamy virus protein bet.</title>
        <authorList>
            <person name="Perkovic M."/>
            <person name="Schmidt S."/>
            <person name="Marino D."/>
            <person name="Russell R.A."/>
            <person name="Stauch B."/>
            <person name="Hofmann H."/>
            <person name="Kopietz F."/>
            <person name="Kloke B.-P."/>
            <person name="Zielonka J."/>
            <person name="Stroever H."/>
            <person name="Hermle J."/>
            <person name="Lindemann D."/>
            <person name="Pathak V.K."/>
            <person name="Schneider G."/>
            <person name="Loechelt M."/>
            <person name="Cichutek K."/>
            <person name="Muenk C."/>
        </authorList>
    </citation>
    <scope>NUCLEOTIDE SEQUENCE [GENOMIC DNA]</scope>
    <scope>INTERACTION WITH HUMAN APOBEC3C</scope>
</reference>
<reference key="4">
    <citation type="journal article" date="1991" name="J. Virol.">
        <title>Analysis of splicing patterns of human spumaretrovirus by polymerase chain reaction reveals complex RNA structures.</title>
        <authorList>
            <person name="Muranyi W."/>
            <person name="Fluegel R.M."/>
        </authorList>
    </citation>
    <scope>ALTERNATIVE SPLICING</scope>
</reference>
<reference key="5">
    <citation type="journal article" date="2002" name="J. Virol.">
        <title>Intra- and intercellular trafficking of the foamy virus auxiliary bet protein.</title>
        <authorList>
            <person name="Lecellier C.H."/>
            <person name="Vermeulen W."/>
            <person name="Bachelerie F."/>
            <person name="Giron M.L."/>
            <person name="Saib A."/>
        </authorList>
    </citation>
    <scope>SUBCELLULAR LOCATION</scope>
</reference>
<reference key="6">
    <citation type="journal article" date="2005" name="J. Virol.">
        <title>Foamy virus Bet proteins function as novel inhibitors of the APOBEC3 family of innate antiretroviral defense factors.</title>
        <authorList>
            <person name="Russell R.A."/>
            <person name="Wiegand H.L."/>
            <person name="Moore M.D."/>
            <person name="Schaefer A."/>
            <person name="McClure M.O."/>
            <person name="Cullen B.R."/>
        </authorList>
    </citation>
    <scope>FUNCTION</scope>
    <scope>INTERACTION WITH HUMAN APOBEC3F AND APOBEC3G</scope>
</reference>
<reference key="7">
    <citation type="journal article" date="2004" name="Curr. Opin. Microbiol.">
        <title>Foamy viruses-a world apart.</title>
        <authorList>
            <person name="Delelis O."/>
            <person name="Lehmann-Che J."/>
            <person name="Saib A."/>
        </authorList>
    </citation>
    <scope>REVIEW</scope>
</reference>
<feature type="chain" id="PRO_0000244972" description="Protein Bet">
    <location>
        <begin position="1"/>
        <end position="482"/>
    </location>
</feature>
<feature type="region of interest" description="Disordered" evidence="2">
    <location>
        <begin position="1"/>
        <end position="52"/>
    </location>
</feature>
<feature type="compositionally biased region" description="Polar residues" evidence="2">
    <location>
        <begin position="10"/>
        <end position="23"/>
    </location>
</feature>
<feature type="splice variant" id="VSP_019620" description="In isoform Bel-2." evidence="6">
    <location>
        <begin position="1"/>
        <end position="126"/>
    </location>
</feature>
<feature type="sequence conflict" description="In Ref. 1; CAA29088." evidence="6" ref="1">
    <original>D</original>
    <variation>A</variation>
    <location>
        <position position="105"/>
    </location>
</feature>
<feature type="sequence conflict" description="In Ref. 1; CAA29088." evidence="6" ref="1">
    <original>P</original>
    <variation>S</variation>
    <location>
        <position position="138"/>
    </location>
</feature>
<feature type="sequence conflict" description="In Ref. 1; CAA29088." evidence="6" ref="1">
    <original>Q</original>
    <variation>H</variation>
    <location>
        <position position="141"/>
    </location>
</feature>
<feature type="sequence conflict" description="In Ref. 3; ABY84670." evidence="6" ref="3">
    <original>E</original>
    <variation>G</variation>
    <location>
        <position position="184"/>
    </location>
</feature>
<feature type="sequence conflict" description="In Ref. 3; ABY84670." evidence="6" ref="3">
    <original>V</original>
    <variation>A</variation>
    <location>
        <position position="370"/>
    </location>
</feature>
<feature type="sequence conflict" description="In Ref. 3; ABY84670." evidence="6" ref="3">
    <original>T</original>
    <variation>A</variation>
    <location>
        <position position="424"/>
    </location>
</feature>
<organism>
    <name type="scientific">Human spumaretrovirus</name>
    <name type="common">SFVcpz(hu)</name>
    <name type="synonym">Human foamy virus</name>
    <dbReference type="NCBI Taxonomy" id="11963"/>
    <lineage>
        <taxon>Viruses</taxon>
        <taxon>Riboviria</taxon>
        <taxon>Pararnavirae</taxon>
        <taxon>Artverviricota</taxon>
        <taxon>Revtraviricetes</taxon>
        <taxon>Ortervirales</taxon>
        <taxon>Retroviridae</taxon>
        <taxon>Spumaretrovirinae</taxon>
        <taxon>Spumavirus</taxon>
        <taxon>Simian foamy virus</taxon>
    </lineage>
</organism>
<gene>
    <name type="primary">bet</name>
</gene>
<name>BET_FOAMV</name>
<protein>
    <recommendedName>
        <fullName>Protein Bet</fullName>
    </recommendedName>
</protein>
<accession>P89873</accession>
<accession>B0LW77</accession>
<accession>P14354</accession>
<accession>P90355</accession>
<organismHost>
    <name type="scientific">Homo sapiens</name>
    <name type="common">Human</name>
    <dbReference type="NCBI Taxonomy" id="9606"/>
</organismHost>
<dbReference type="EMBL" id="X05591">
    <property type="status" value="NOT_ANNOTATED_CDS"/>
    <property type="molecule type" value="Genomic_RNA"/>
</dbReference>
<dbReference type="EMBL" id="X05592">
    <property type="protein sequence ID" value="CAA29088.1"/>
    <property type="status" value="ALT_SEQ"/>
    <property type="molecule type" value="Genomic_DNA"/>
</dbReference>
<dbReference type="EMBL" id="U21247">
    <property type="protein sequence ID" value="AAB48114.1"/>
    <property type="molecule type" value="Genomic_RNA"/>
</dbReference>
<dbReference type="EMBL" id="U21247">
    <property type="protein sequence ID" value="AAB48116.1"/>
    <property type="molecule type" value="Genomic_RNA"/>
</dbReference>
<dbReference type="EMBL" id="EU381420">
    <property type="protein sequence ID" value="ABY84670.1"/>
    <property type="molecule type" value="Genomic_DNA"/>
</dbReference>
<dbReference type="Proteomes" id="UP000138352">
    <property type="component" value="Genome"/>
</dbReference>
<dbReference type="GO" id="GO:0005576">
    <property type="term" value="C:extracellular region"/>
    <property type="evidence" value="ECO:0007669"/>
    <property type="project" value="UniProtKB-SubCell"/>
</dbReference>
<dbReference type="GO" id="GO:0030430">
    <property type="term" value="C:host cell cytoplasm"/>
    <property type="evidence" value="ECO:0007669"/>
    <property type="project" value="UniProtKB-SubCell"/>
</dbReference>
<dbReference type="GO" id="GO:0042025">
    <property type="term" value="C:host cell nucleus"/>
    <property type="evidence" value="ECO:0007669"/>
    <property type="project" value="UniProtKB-SubCell"/>
</dbReference>
<dbReference type="GO" id="GO:0045893">
    <property type="term" value="P:positive regulation of DNA-templated transcription"/>
    <property type="evidence" value="ECO:0007669"/>
    <property type="project" value="InterPro"/>
</dbReference>
<dbReference type="GO" id="GO:0016032">
    <property type="term" value="P:viral process"/>
    <property type="evidence" value="ECO:0007669"/>
    <property type="project" value="InterPro"/>
</dbReference>
<dbReference type="InterPro" id="IPR004956">
    <property type="entry name" value="Foamy_BEL"/>
</dbReference>
<dbReference type="Pfam" id="PF03274">
    <property type="entry name" value="Foamy_BEL"/>
    <property type="match status" value="1"/>
</dbReference>
<proteinExistence type="evidence at protein level"/>
<keyword id="KW-0025">Alternative splicing</keyword>
<keyword id="KW-1035">Host cytoplasm</keyword>
<keyword id="KW-1048">Host nucleus</keyword>
<keyword id="KW-0945">Host-virus interaction</keyword>
<keyword id="KW-1185">Reference proteome</keyword>
<keyword id="KW-0964">Secreted</keyword>
<evidence type="ECO:0000250" key="1"/>
<evidence type="ECO:0000256" key="2">
    <source>
        <dbReference type="SAM" id="MobiDB-lite"/>
    </source>
</evidence>
<evidence type="ECO:0000269" key="3">
    <source>
    </source>
</evidence>
<evidence type="ECO:0000269" key="4">
    <source>
    </source>
</evidence>
<evidence type="ECO:0000269" key="5">
    <source>
    </source>
</evidence>
<evidence type="ECO:0000305" key="6"/>
<comment type="function">
    <text evidence="1 4">Bet counteracts the innate antiretroviral activity of APOBEC3 family defense factors by inhibiting their incorporation into virions. May be implicated in the establishment and/or maintenance of viral persistance. Bet is required for viral replication (By similarity).</text>
</comment>
<comment type="subunit">
    <text evidence="4 5">Bet binds to human APOBEC3F and APOBEC3G. Bet interacts with host APOBEC3C; this interaction does not induce APOBEC3C degradation, but prevents dimerization and incorporation into virion of the latter.</text>
</comment>
<comment type="subcellular location">
    <molecule>Isoform Bet</molecule>
    <subcellularLocation>
        <location evidence="3">Host cytoplasm</location>
    </subcellularLocation>
    <subcellularLocation>
        <location evidence="3">Host nucleus</location>
    </subcellularLocation>
    <subcellularLocation>
        <location evidence="3">Secreted</location>
    </subcellularLocation>
    <text>Bet is highly expressed in infected cells, where it localizes to both cytoplasm and nucleus (PubMed:11884565). Also secreted and internalized by non-infected surrounding cells (PubMed:11884565).</text>
</comment>
<comment type="subcellular location">
    <molecule>Isoform Bel-2</molecule>
    <subcellularLocation>
        <location evidence="3">Host nucleus</location>
    </subcellularLocation>
</comment>
<comment type="alternative products">
    <event type="alternative splicing"/>
    <isoform>
        <id>P89873-1</id>
        <name>Bet</name>
        <sequence type="displayed"/>
    </isoform>
    <isoform>
        <id>P14353-1</id>
        <name>Bel-1</name>
        <name>Bel1</name>
        <sequence type="external"/>
    </isoform>
    <isoform>
        <id>P89873-2</id>
        <name>Bel-2</name>
        <name>Bel2</name>
        <sequence type="described" ref="VSP_019620"/>
    </isoform>
    <text>The first 88 residues are shared by isoform Bet and isoform Bel-1, the last 396 residues are shared by isoform Bet and isoform Bel-2.</text>
</comment>
<comment type="sequence caution" evidence="6">
    <conflict type="erroneous gene model prediction">
        <sequence resource="EMBL-CDS" id="CAA29088"/>
    </conflict>
</comment>
<sequence length="482" mass="55244">MDSYEKEESVASTSGIQDLQTLSELVGPENAGEGELTIAEEPEENPRRPRRYTKREVKCVSYHAYKEIEDKHPQHIKLQDWIPTPEEMIAQKVQNQDLGTILSFDVTCLKSITSLGRNDPGDDPSIMSHVLPVVTPWPMSQDHYAPTLFGILDRYYQGYLKSPATYQTWKFTCQVDPSGKRFMETQFWVPPLGQVNIQFYKNYQILTCCQAVDPFANIFHGTDEEMFDIDSGPDVWCSPSLCFKVIYEGAMGQKQEQKTWLCRLGHGHRMGACDYRKVDLYAMRQGKENPYGDRGDAALQYAYQVKRGCKAGCLASPVLNYKALQFHRTIMADFTNPRIGEGHLAHGYQAAMEAYGPQRGSNEERVWWNVTRNQGKQGGEYYREGGEEPHYPNTPAPHRRTWDERHKVLKLSSFATPSDIQRWTTKALPYGWKVVTESGNDYTSRRKIRTLTEMTQDEIRKRWESGYCDPFIDSGSDSDGPF</sequence>